<evidence type="ECO:0000255" key="1">
    <source>
        <dbReference type="HAMAP-Rule" id="MF_00283"/>
    </source>
</evidence>
<evidence type="ECO:0000305" key="2"/>
<sequence length="795" mass="86457">MKFSEKWLREWVNPAIDTQALSEQLSMAGLEVDGVTPAAAKFNGVLVGEVVECGQHPDADKLRVTKINVGGDELLDIVCGAPNCRLGIKVAVATVGAVLPGDFKIKKAKLRGQPSNGMLCAFVELGISEEGDGIMELPSDAPVGTDLREYLGLDDNIIDVDLTPNRGDCLGIKGLAREVGVLNSIDVNVLQIPAVTATVDDKVSIELVNEDACPRYLGRVIKGINLDTATPLWMVEKLRRSGVRSIDPVVDVTNYVLLELGHPMHAFDLNAIEGGIKVRSANAGEELVLLDGNSVKLNESTLVIADHNKALAIAGIFGGEQSGVTNKTSDILLESAFFNPVAIAGQARSYGLHTDASHRYERGVDFALQHDAIERATALLLEIVGGEAGPVVEAVAADKLPKVTEVRLRRSRLDRVIGHHIEDEKVTDILTRLGFNVKVENDSWSADVPSYRFDVRIEEDLIEEVARVYGYNSIPNVAPTAKLKMTTHNEATIALSKFRNTLVARGYQEAITYSFVDPKAQAILHPESQPLVLPHPISIEMSAMRVSLMPGLLASLAYNQNRQQPRIRLFEHGLKFLSDENAENGVNQVPVIGGVITGLAHGEHWVEEKRNVDFYDVKGDVEALLAITNDMSRFEIKAEQSDGLHPGQSAVIYVAGKKVGFFGALHPQAQKSLDINNATFVFEIEMSAIEKRNLPQVAGVSKFPSNRRDIAILVQESVNIGDILTAIEKVGGNQLVDLNLFDVYKGKGIEPNYKSLAIALTLQSVDRTLEEKDINLVVDNVVATLAEQFNASLRD</sequence>
<keyword id="KW-0030">Aminoacyl-tRNA synthetase</keyword>
<keyword id="KW-0067">ATP-binding</keyword>
<keyword id="KW-0963">Cytoplasm</keyword>
<keyword id="KW-0436">Ligase</keyword>
<keyword id="KW-0460">Magnesium</keyword>
<keyword id="KW-0479">Metal-binding</keyword>
<keyword id="KW-0547">Nucleotide-binding</keyword>
<keyword id="KW-0648">Protein biosynthesis</keyword>
<keyword id="KW-1185">Reference proteome</keyword>
<keyword id="KW-0694">RNA-binding</keyword>
<keyword id="KW-0820">tRNA-binding</keyword>
<organism>
    <name type="scientific">Pseudoalteromonas translucida (strain TAC 125)</name>
    <dbReference type="NCBI Taxonomy" id="326442"/>
    <lineage>
        <taxon>Bacteria</taxon>
        <taxon>Pseudomonadati</taxon>
        <taxon>Pseudomonadota</taxon>
        <taxon>Gammaproteobacteria</taxon>
        <taxon>Alteromonadales</taxon>
        <taxon>Pseudoalteromonadaceae</taxon>
        <taxon>Pseudoalteromonas</taxon>
    </lineage>
</organism>
<reference key="1">
    <citation type="journal article" date="2005" name="Genome Res.">
        <title>Coping with cold: the genome of the versatile marine Antarctica bacterium Pseudoalteromonas haloplanktis TAC125.</title>
        <authorList>
            <person name="Medigue C."/>
            <person name="Krin E."/>
            <person name="Pascal G."/>
            <person name="Barbe V."/>
            <person name="Bernsel A."/>
            <person name="Bertin P.N."/>
            <person name="Cheung F."/>
            <person name="Cruveiller S."/>
            <person name="D'Amico S."/>
            <person name="Duilio A."/>
            <person name="Fang G."/>
            <person name="Feller G."/>
            <person name="Ho C."/>
            <person name="Mangenot S."/>
            <person name="Marino G."/>
            <person name="Nilsson J."/>
            <person name="Parrilli E."/>
            <person name="Rocha E.P.C."/>
            <person name="Rouy Z."/>
            <person name="Sekowska A."/>
            <person name="Tutino M.L."/>
            <person name="Vallenet D."/>
            <person name="von Heijne G."/>
            <person name="Danchin A."/>
        </authorList>
    </citation>
    <scope>NUCLEOTIDE SEQUENCE [LARGE SCALE GENOMIC DNA]</scope>
    <source>
        <strain>TAC 125</strain>
    </source>
</reference>
<name>SYFB_PSET1</name>
<gene>
    <name evidence="1" type="primary">pheT</name>
    <name type="ordered locus">PSHAa1903</name>
</gene>
<comment type="catalytic activity">
    <reaction evidence="1">
        <text>tRNA(Phe) + L-phenylalanine + ATP = L-phenylalanyl-tRNA(Phe) + AMP + diphosphate + H(+)</text>
        <dbReference type="Rhea" id="RHEA:19413"/>
        <dbReference type="Rhea" id="RHEA-COMP:9668"/>
        <dbReference type="Rhea" id="RHEA-COMP:9699"/>
        <dbReference type="ChEBI" id="CHEBI:15378"/>
        <dbReference type="ChEBI" id="CHEBI:30616"/>
        <dbReference type="ChEBI" id="CHEBI:33019"/>
        <dbReference type="ChEBI" id="CHEBI:58095"/>
        <dbReference type="ChEBI" id="CHEBI:78442"/>
        <dbReference type="ChEBI" id="CHEBI:78531"/>
        <dbReference type="ChEBI" id="CHEBI:456215"/>
        <dbReference type="EC" id="6.1.1.20"/>
    </reaction>
</comment>
<comment type="cofactor">
    <cofactor evidence="1">
        <name>Mg(2+)</name>
        <dbReference type="ChEBI" id="CHEBI:18420"/>
    </cofactor>
    <text evidence="1">Binds 2 magnesium ions per tetramer.</text>
</comment>
<comment type="subunit">
    <text evidence="1">Tetramer of two alpha and two beta subunits.</text>
</comment>
<comment type="subcellular location">
    <subcellularLocation>
        <location evidence="1">Cytoplasm</location>
    </subcellularLocation>
</comment>
<comment type="similarity">
    <text evidence="1">Belongs to the phenylalanyl-tRNA synthetase beta subunit family. Type 1 subfamily.</text>
</comment>
<comment type="sequence caution" evidence="2">
    <conflict type="erroneous initiation">
        <sequence resource="EMBL-CDS" id="CAI86973"/>
    </conflict>
</comment>
<protein>
    <recommendedName>
        <fullName evidence="1">Phenylalanine--tRNA ligase beta subunit</fullName>
        <ecNumber evidence="1">6.1.1.20</ecNumber>
    </recommendedName>
    <alternativeName>
        <fullName evidence="1">Phenylalanyl-tRNA synthetase beta subunit</fullName>
        <shortName evidence="1">PheRS</shortName>
    </alternativeName>
</protein>
<feature type="chain" id="PRO_0000232817" description="Phenylalanine--tRNA ligase beta subunit">
    <location>
        <begin position="1"/>
        <end position="795"/>
    </location>
</feature>
<feature type="domain" description="tRNA-binding" evidence="1">
    <location>
        <begin position="39"/>
        <end position="148"/>
    </location>
</feature>
<feature type="domain" description="B5" evidence="1">
    <location>
        <begin position="401"/>
        <end position="476"/>
    </location>
</feature>
<feature type="domain" description="FDX-ACB" evidence="1">
    <location>
        <begin position="701"/>
        <end position="794"/>
    </location>
</feature>
<feature type="binding site" evidence="1">
    <location>
        <position position="454"/>
    </location>
    <ligand>
        <name>Mg(2+)</name>
        <dbReference type="ChEBI" id="CHEBI:18420"/>
        <note>shared with alpha subunit</note>
    </ligand>
</feature>
<feature type="binding site" evidence="1">
    <location>
        <position position="460"/>
    </location>
    <ligand>
        <name>Mg(2+)</name>
        <dbReference type="ChEBI" id="CHEBI:18420"/>
        <note>shared with alpha subunit</note>
    </ligand>
</feature>
<feature type="binding site" evidence="1">
    <location>
        <position position="463"/>
    </location>
    <ligand>
        <name>Mg(2+)</name>
        <dbReference type="ChEBI" id="CHEBI:18420"/>
        <note>shared with alpha subunit</note>
    </ligand>
</feature>
<feature type="binding site" evidence="1">
    <location>
        <position position="464"/>
    </location>
    <ligand>
        <name>Mg(2+)</name>
        <dbReference type="ChEBI" id="CHEBI:18420"/>
        <note>shared with alpha subunit</note>
    </ligand>
</feature>
<accession>Q3IIL2</accession>
<dbReference type="EC" id="6.1.1.20" evidence="1"/>
<dbReference type="EMBL" id="CR954246">
    <property type="protein sequence ID" value="CAI86973.1"/>
    <property type="status" value="ALT_INIT"/>
    <property type="molecule type" value="Genomic_DNA"/>
</dbReference>
<dbReference type="SMR" id="Q3IIL2"/>
<dbReference type="STRING" id="326442.PSHAa1903"/>
<dbReference type="KEGG" id="pha:PSHAa1903"/>
<dbReference type="PATRIC" id="fig|326442.8.peg.1848"/>
<dbReference type="eggNOG" id="COG0072">
    <property type="taxonomic scope" value="Bacteria"/>
</dbReference>
<dbReference type="HOGENOM" id="CLU_016891_0_0_6"/>
<dbReference type="BioCyc" id="PHAL326442:PSHA_RS09375-MONOMER"/>
<dbReference type="Proteomes" id="UP000006843">
    <property type="component" value="Chromosome I"/>
</dbReference>
<dbReference type="GO" id="GO:0009328">
    <property type="term" value="C:phenylalanine-tRNA ligase complex"/>
    <property type="evidence" value="ECO:0007669"/>
    <property type="project" value="TreeGrafter"/>
</dbReference>
<dbReference type="GO" id="GO:0005524">
    <property type="term" value="F:ATP binding"/>
    <property type="evidence" value="ECO:0007669"/>
    <property type="project" value="UniProtKB-UniRule"/>
</dbReference>
<dbReference type="GO" id="GO:0000287">
    <property type="term" value="F:magnesium ion binding"/>
    <property type="evidence" value="ECO:0007669"/>
    <property type="project" value="UniProtKB-UniRule"/>
</dbReference>
<dbReference type="GO" id="GO:0004826">
    <property type="term" value="F:phenylalanine-tRNA ligase activity"/>
    <property type="evidence" value="ECO:0007669"/>
    <property type="project" value="UniProtKB-UniRule"/>
</dbReference>
<dbReference type="GO" id="GO:0000049">
    <property type="term" value="F:tRNA binding"/>
    <property type="evidence" value="ECO:0007669"/>
    <property type="project" value="UniProtKB-KW"/>
</dbReference>
<dbReference type="GO" id="GO:0006432">
    <property type="term" value="P:phenylalanyl-tRNA aminoacylation"/>
    <property type="evidence" value="ECO:0007669"/>
    <property type="project" value="UniProtKB-UniRule"/>
</dbReference>
<dbReference type="CDD" id="cd00769">
    <property type="entry name" value="PheRS_beta_core"/>
    <property type="match status" value="1"/>
</dbReference>
<dbReference type="CDD" id="cd02796">
    <property type="entry name" value="tRNA_bind_bactPheRS"/>
    <property type="match status" value="1"/>
</dbReference>
<dbReference type="FunFam" id="2.40.50.140:FF:000045">
    <property type="entry name" value="Phenylalanine--tRNA ligase beta subunit"/>
    <property type="match status" value="1"/>
</dbReference>
<dbReference type="FunFam" id="3.30.56.10:FF:000002">
    <property type="entry name" value="Phenylalanine--tRNA ligase beta subunit"/>
    <property type="match status" value="1"/>
</dbReference>
<dbReference type="FunFam" id="3.30.70.380:FF:000001">
    <property type="entry name" value="Phenylalanine--tRNA ligase beta subunit"/>
    <property type="match status" value="1"/>
</dbReference>
<dbReference type="FunFam" id="3.30.930.10:FF:000022">
    <property type="entry name" value="Phenylalanine--tRNA ligase beta subunit"/>
    <property type="match status" value="1"/>
</dbReference>
<dbReference type="FunFam" id="3.50.40.10:FF:000001">
    <property type="entry name" value="Phenylalanine--tRNA ligase beta subunit"/>
    <property type="match status" value="1"/>
</dbReference>
<dbReference type="Gene3D" id="3.30.56.10">
    <property type="match status" value="2"/>
</dbReference>
<dbReference type="Gene3D" id="3.30.930.10">
    <property type="entry name" value="Bira Bifunctional Protein, Domain 2"/>
    <property type="match status" value="1"/>
</dbReference>
<dbReference type="Gene3D" id="3.30.70.380">
    <property type="entry name" value="Ferrodoxin-fold anticodon-binding domain"/>
    <property type="match status" value="1"/>
</dbReference>
<dbReference type="Gene3D" id="2.40.50.140">
    <property type="entry name" value="Nucleic acid-binding proteins"/>
    <property type="match status" value="1"/>
</dbReference>
<dbReference type="Gene3D" id="3.50.40.10">
    <property type="entry name" value="Phenylalanyl-trna Synthetase, Chain B, domain 3"/>
    <property type="match status" value="1"/>
</dbReference>
<dbReference type="HAMAP" id="MF_00283">
    <property type="entry name" value="Phe_tRNA_synth_beta1"/>
    <property type="match status" value="1"/>
</dbReference>
<dbReference type="InterPro" id="IPR045864">
    <property type="entry name" value="aa-tRNA-synth_II/BPL/LPL"/>
</dbReference>
<dbReference type="InterPro" id="IPR005146">
    <property type="entry name" value="B3/B4_tRNA-bd"/>
</dbReference>
<dbReference type="InterPro" id="IPR009061">
    <property type="entry name" value="DNA-bd_dom_put_sf"/>
</dbReference>
<dbReference type="InterPro" id="IPR005121">
    <property type="entry name" value="Fdx_antiC-bd"/>
</dbReference>
<dbReference type="InterPro" id="IPR036690">
    <property type="entry name" value="Fdx_antiC-bd_sf"/>
</dbReference>
<dbReference type="InterPro" id="IPR012340">
    <property type="entry name" value="NA-bd_OB-fold"/>
</dbReference>
<dbReference type="InterPro" id="IPR045060">
    <property type="entry name" value="Phe-tRNA-ligase_IIc_bsu"/>
</dbReference>
<dbReference type="InterPro" id="IPR004532">
    <property type="entry name" value="Phe-tRNA-ligase_IIc_bsu_bact"/>
</dbReference>
<dbReference type="InterPro" id="IPR020825">
    <property type="entry name" value="Phe-tRNA_synthase-like_B3/B4"/>
</dbReference>
<dbReference type="InterPro" id="IPR041616">
    <property type="entry name" value="PheRS_beta_core"/>
</dbReference>
<dbReference type="InterPro" id="IPR002547">
    <property type="entry name" value="tRNA-bd_dom"/>
</dbReference>
<dbReference type="InterPro" id="IPR033714">
    <property type="entry name" value="tRNA_bind_bactPheRS"/>
</dbReference>
<dbReference type="InterPro" id="IPR005147">
    <property type="entry name" value="tRNA_synthase_B5-dom"/>
</dbReference>
<dbReference type="NCBIfam" id="TIGR00472">
    <property type="entry name" value="pheT_bact"/>
    <property type="match status" value="1"/>
</dbReference>
<dbReference type="NCBIfam" id="NF045760">
    <property type="entry name" value="YtpR"/>
    <property type="match status" value="1"/>
</dbReference>
<dbReference type="PANTHER" id="PTHR10947:SF0">
    <property type="entry name" value="PHENYLALANINE--TRNA LIGASE BETA SUBUNIT"/>
    <property type="match status" value="1"/>
</dbReference>
<dbReference type="PANTHER" id="PTHR10947">
    <property type="entry name" value="PHENYLALANYL-TRNA SYNTHETASE BETA CHAIN AND LEUCINE-RICH REPEAT-CONTAINING PROTEIN 47"/>
    <property type="match status" value="1"/>
</dbReference>
<dbReference type="Pfam" id="PF03483">
    <property type="entry name" value="B3_4"/>
    <property type="match status" value="1"/>
</dbReference>
<dbReference type="Pfam" id="PF03484">
    <property type="entry name" value="B5"/>
    <property type="match status" value="1"/>
</dbReference>
<dbReference type="Pfam" id="PF03147">
    <property type="entry name" value="FDX-ACB"/>
    <property type="match status" value="1"/>
</dbReference>
<dbReference type="Pfam" id="PF01588">
    <property type="entry name" value="tRNA_bind"/>
    <property type="match status" value="1"/>
</dbReference>
<dbReference type="Pfam" id="PF17759">
    <property type="entry name" value="tRNA_synthFbeta"/>
    <property type="match status" value="1"/>
</dbReference>
<dbReference type="SMART" id="SM00873">
    <property type="entry name" value="B3_4"/>
    <property type="match status" value="1"/>
</dbReference>
<dbReference type="SMART" id="SM00874">
    <property type="entry name" value="B5"/>
    <property type="match status" value="1"/>
</dbReference>
<dbReference type="SMART" id="SM00896">
    <property type="entry name" value="FDX-ACB"/>
    <property type="match status" value="1"/>
</dbReference>
<dbReference type="SUPFAM" id="SSF54991">
    <property type="entry name" value="Anticodon-binding domain of PheRS"/>
    <property type="match status" value="1"/>
</dbReference>
<dbReference type="SUPFAM" id="SSF55681">
    <property type="entry name" value="Class II aaRS and biotin synthetases"/>
    <property type="match status" value="1"/>
</dbReference>
<dbReference type="SUPFAM" id="SSF50249">
    <property type="entry name" value="Nucleic acid-binding proteins"/>
    <property type="match status" value="1"/>
</dbReference>
<dbReference type="SUPFAM" id="SSF56037">
    <property type="entry name" value="PheT/TilS domain"/>
    <property type="match status" value="1"/>
</dbReference>
<dbReference type="SUPFAM" id="SSF46955">
    <property type="entry name" value="Putative DNA-binding domain"/>
    <property type="match status" value="1"/>
</dbReference>
<dbReference type="PROSITE" id="PS51483">
    <property type="entry name" value="B5"/>
    <property type="match status" value="1"/>
</dbReference>
<dbReference type="PROSITE" id="PS51447">
    <property type="entry name" value="FDX_ACB"/>
    <property type="match status" value="1"/>
</dbReference>
<dbReference type="PROSITE" id="PS50886">
    <property type="entry name" value="TRBD"/>
    <property type="match status" value="1"/>
</dbReference>
<proteinExistence type="inferred from homology"/>